<reference key="1">
    <citation type="journal article" date="1992" name="J. Mol. Biol.">
        <title>Gene organization deduced from the complete sequence of liverwort Marchantia polymorpha mitochondrial DNA. A primitive form of plant mitochondrial genome.</title>
        <authorList>
            <person name="Oda K."/>
            <person name="Yamato K."/>
            <person name="Ohta E."/>
            <person name="Nakamura Y."/>
            <person name="Takemura M."/>
            <person name="Nozato N."/>
            <person name="Akashi K."/>
            <person name="Kanegae T."/>
            <person name="Ogura Y."/>
            <person name="Kohchi T."/>
            <person name="Ohyama K."/>
        </authorList>
    </citation>
    <scope>NUCLEOTIDE SEQUENCE [GENOMIC DNA]</scope>
</reference>
<reference key="2">
    <citation type="journal article" date="1992" name="Nucleic Acids Res.">
        <title>Gene clusters for ribosomal proteins in the mitochondrial genome of a liverwort, Marchantia polymorpha.</title>
        <authorList>
            <person name="Takemura M."/>
            <person name="Oda K."/>
            <person name="Yamato K."/>
            <person name="Ohta E."/>
            <person name="Nakamura Y."/>
            <person name="Nozato N."/>
            <person name="Akashi K."/>
            <person name="Ohyama K."/>
        </authorList>
    </citation>
    <scope>NUCLEOTIDE SEQUENCE [GENOMIC DNA]</scope>
</reference>
<gene>
    <name type="primary">RPL6</name>
</gene>
<proteinExistence type="inferred from homology"/>
<comment type="subcellular location">
    <subcellularLocation>
        <location>Mitochondrion</location>
    </subcellularLocation>
</comment>
<comment type="similarity">
    <text evidence="1">Belongs to the universal ribosomal protein uL6 family.</text>
</comment>
<accession>P26861</accession>
<evidence type="ECO:0000305" key="1"/>
<feature type="chain" id="PRO_0000131092" description="Large ribosomal subunit protein uL6m">
    <location>
        <begin position="1"/>
        <end position="101"/>
    </location>
</feature>
<keyword id="KW-0496">Mitochondrion</keyword>
<keyword id="KW-0687">Ribonucleoprotein</keyword>
<keyword id="KW-0689">Ribosomal protein</keyword>
<dbReference type="EMBL" id="M68929">
    <property type="protein sequence ID" value="AAC09422.1"/>
    <property type="molecule type" value="Genomic_DNA"/>
</dbReference>
<dbReference type="PIR" id="S25981">
    <property type="entry name" value="S25981"/>
</dbReference>
<dbReference type="RefSeq" id="NP_054425.1">
    <property type="nucleotide sequence ID" value="NC_001660.1"/>
</dbReference>
<dbReference type="SMR" id="P26861"/>
<dbReference type="GeneID" id="2702474"/>
<dbReference type="GO" id="GO:0005739">
    <property type="term" value="C:mitochondrion"/>
    <property type="evidence" value="ECO:0007669"/>
    <property type="project" value="UniProtKB-SubCell"/>
</dbReference>
<dbReference type="GO" id="GO:1990904">
    <property type="term" value="C:ribonucleoprotein complex"/>
    <property type="evidence" value="ECO:0007669"/>
    <property type="project" value="UniProtKB-KW"/>
</dbReference>
<dbReference type="GO" id="GO:0005840">
    <property type="term" value="C:ribosome"/>
    <property type="evidence" value="ECO:0007669"/>
    <property type="project" value="UniProtKB-KW"/>
</dbReference>
<dbReference type="GO" id="GO:0019843">
    <property type="term" value="F:rRNA binding"/>
    <property type="evidence" value="ECO:0007669"/>
    <property type="project" value="InterPro"/>
</dbReference>
<dbReference type="GO" id="GO:0003735">
    <property type="term" value="F:structural constituent of ribosome"/>
    <property type="evidence" value="ECO:0007669"/>
    <property type="project" value="InterPro"/>
</dbReference>
<dbReference type="GO" id="GO:0006412">
    <property type="term" value="P:translation"/>
    <property type="evidence" value="ECO:0007669"/>
    <property type="project" value="InterPro"/>
</dbReference>
<dbReference type="FunFam" id="3.90.930.12:FF:000007">
    <property type="entry name" value="60S ribosomal protein L6"/>
    <property type="match status" value="1"/>
</dbReference>
<dbReference type="Gene3D" id="3.90.930.12">
    <property type="entry name" value="Ribosomal protein L6, alpha-beta domain"/>
    <property type="match status" value="1"/>
</dbReference>
<dbReference type="InterPro" id="IPR000702">
    <property type="entry name" value="Ribosomal_uL6-like"/>
</dbReference>
<dbReference type="InterPro" id="IPR036789">
    <property type="entry name" value="Ribosomal_uL6-like_a/b-dom_sf"/>
</dbReference>
<dbReference type="InterPro" id="IPR020040">
    <property type="entry name" value="Ribosomal_uL6_a/b-dom"/>
</dbReference>
<dbReference type="InterPro" id="IPR019906">
    <property type="entry name" value="Ribosomal_uL6_bac-type"/>
</dbReference>
<dbReference type="InterPro" id="IPR002358">
    <property type="entry name" value="Ribosomal_uL6_CS"/>
</dbReference>
<dbReference type="PANTHER" id="PTHR11655">
    <property type="entry name" value="60S/50S RIBOSOMAL PROTEIN L6/L9"/>
    <property type="match status" value="1"/>
</dbReference>
<dbReference type="PANTHER" id="PTHR11655:SF17">
    <property type="entry name" value="RIBOSOMAL PROTEIN L6-RELATED"/>
    <property type="match status" value="1"/>
</dbReference>
<dbReference type="Pfam" id="PF00347">
    <property type="entry name" value="Ribosomal_L6"/>
    <property type="match status" value="1"/>
</dbReference>
<dbReference type="PRINTS" id="PR00059">
    <property type="entry name" value="RIBOSOMALL6"/>
</dbReference>
<dbReference type="SUPFAM" id="SSF56053">
    <property type="entry name" value="Ribosomal protein L6"/>
    <property type="match status" value="1"/>
</dbReference>
<dbReference type="PROSITE" id="PS00525">
    <property type="entry name" value="RIBOSOMAL_L6_1"/>
    <property type="match status" value="1"/>
</dbReference>
<name>RM06_MARPO</name>
<protein>
    <recommendedName>
        <fullName evidence="1">Large ribosomal subunit protein uL6m</fullName>
    </recommendedName>
    <alternativeName>
        <fullName>60S ribosomal protein L6, mitochondrial</fullName>
    </alternativeName>
</protein>
<sequence length="101" mass="11423">MEAKFFCFLEIIGVGYKASTNAQGSILYLKLGFSHEIRLQVTPSVRVFCLKPNLICCTGMDHQKVTQFAAIVKSCKPPEVYKGKGIQYRNEIIHKKQGKKK</sequence>
<geneLocation type="mitochondrion"/>
<organism>
    <name type="scientific">Marchantia polymorpha</name>
    <name type="common">Common liverwort</name>
    <name type="synonym">Marchantia aquatica</name>
    <dbReference type="NCBI Taxonomy" id="3197"/>
    <lineage>
        <taxon>Eukaryota</taxon>
        <taxon>Viridiplantae</taxon>
        <taxon>Streptophyta</taxon>
        <taxon>Embryophyta</taxon>
        <taxon>Marchantiophyta</taxon>
        <taxon>Marchantiopsida</taxon>
        <taxon>Marchantiidae</taxon>
        <taxon>Marchantiales</taxon>
        <taxon>Marchantiaceae</taxon>
        <taxon>Marchantia</taxon>
    </lineage>
</organism>